<sequence>MQKMRTLGEFIVEKQHDFPHASGELSSLLASIRLAAKIVNREINKAGLADIIGASGNDNIQGEEQQKLDLYANEKFKAALEARDQVCGVASEEEDEAVAFNKELNKNAKYVVLMDPLDGSSNIDVNVSVGTIFSIYRRVSPVGTPPTQEDFLQPGNKQVAAGYVIYGSSTMLVYTTGNGVNGFTYDPSLGTFYLSHENMRIPENGKIYSINEGNYIRFPTGVKKYIKFCQENVPEDGRPYTSRYIGSLVADFHRNLLKGGIYLYPSTQSHPNGKLRLLYECNPMAFLIEQAGGLASDGVHRIMDIKPTELHQRVPFFVGSKNMVHKVEEFLETYPD</sequence>
<accession>A5F599</accession>
<accession>C3M532</accession>
<gene>
    <name evidence="1" type="primary">fbp</name>
    <name type="ordered locus">VC0395_A2122</name>
    <name type="ordered locus">VC395_2657</name>
</gene>
<evidence type="ECO:0000255" key="1">
    <source>
        <dbReference type="HAMAP-Rule" id="MF_01855"/>
    </source>
</evidence>
<dbReference type="EC" id="3.1.3.11" evidence="1"/>
<dbReference type="EMBL" id="CP000627">
    <property type="protein sequence ID" value="ABQ20484.1"/>
    <property type="molecule type" value="Genomic_DNA"/>
</dbReference>
<dbReference type="EMBL" id="CP001235">
    <property type="protein sequence ID" value="ACP10643.1"/>
    <property type="molecule type" value="Genomic_DNA"/>
</dbReference>
<dbReference type="RefSeq" id="WP_001171116.1">
    <property type="nucleotide sequence ID" value="NZ_JAACZH010000021.1"/>
</dbReference>
<dbReference type="SMR" id="A5F599"/>
<dbReference type="KEGG" id="vco:VC0395_A2122"/>
<dbReference type="KEGG" id="vcr:VC395_2657"/>
<dbReference type="PATRIC" id="fig|345073.21.peg.2556"/>
<dbReference type="eggNOG" id="COG0158">
    <property type="taxonomic scope" value="Bacteria"/>
</dbReference>
<dbReference type="HOGENOM" id="CLU_039977_2_2_6"/>
<dbReference type="OrthoDB" id="9806756at2"/>
<dbReference type="UniPathway" id="UPA00138"/>
<dbReference type="Proteomes" id="UP000000249">
    <property type="component" value="Chromosome 2"/>
</dbReference>
<dbReference type="GO" id="GO:0005829">
    <property type="term" value="C:cytosol"/>
    <property type="evidence" value="ECO:0007669"/>
    <property type="project" value="TreeGrafter"/>
</dbReference>
<dbReference type="GO" id="GO:0042132">
    <property type="term" value="F:fructose 1,6-bisphosphate 1-phosphatase activity"/>
    <property type="evidence" value="ECO:0007669"/>
    <property type="project" value="UniProtKB-UniRule"/>
</dbReference>
<dbReference type="GO" id="GO:0000287">
    <property type="term" value="F:magnesium ion binding"/>
    <property type="evidence" value="ECO:0007669"/>
    <property type="project" value="UniProtKB-UniRule"/>
</dbReference>
<dbReference type="GO" id="GO:0030388">
    <property type="term" value="P:fructose 1,6-bisphosphate metabolic process"/>
    <property type="evidence" value="ECO:0007669"/>
    <property type="project" value="TreeGrafter"/>
</dbReference>
<dbReference type="GO" id="GO:0006002">
    <property type="term" value="P:fructose 6-phosphate metabolic process"/>
    <property type="evidence" value="ECO:0007669"/>
    <property type="project" value="TreeGrafter"/>
</dbReference>
<dbReference type="GO" id="GO:0006000">
    <property type="term" value="P:fructose metabolic process"/>
    <property type="evidence" value="ECO:0007669"/>
    <property type="project" value="TreeGrafter"/>
</dbReference>
<dbReference type="GO" id="GO:0006094">
    <property type="term" value="P:gluconeogenesis"/>
    <property type="evidence" value="ECO:0007669"/>
    <property type="project" value="UniProtKB-UniRule"/>
</dbReference>
<dbReference type="GO" id="GO:0005986">
    <property type="term" value="P:sucrose biosynthetic process"/>
    <property type="evidence" value="ECO:0007669"/>
    <property type="project" value="TreeGrafter"/>
</dbReference>
<dbReference type="CDD" id="cd00354">
    <property type="entry name" value="FBPase"/>
    <property type="match status" value="1"/>
</dbReference>
<dbReference type="FunFam" id="3.30.540.10:FF:000002">
    <property type="entry name" value="Fructose-1,6-bisphosphatase class 1"/>
    <property type="match status" value="1"/>
</dbReference>
<dbReference type="FunFam" id="3.40.190.80:FF:000001">
    <property type="entry name" value="Fructose-1,6-bisphosphatase class 1"/>
    <property type="match status" value="1"/>
</dbReference>
<dbReference type="Gene3D" id="3.40.190.80">
    <property type="match status" value="1"/>
</dbReference>
<dbReference type="Gene3D" id="3.30.540.10">
    <property type="entry name" value="Fructose-1,6-Bisphosphatase, subunit A, domain 1"/>
    <property type="match status" value="1"/>
</dbReference>
<dbReference type="HAMAP" id="MF_01855">
    <property type="entry name" value="FBPase_class1"/>
    <property type="match status" value="1"/>
</dbReference>
<dbReference type="InterPro" id="IPR044015">
    <property type="entry name" value="FBPase_C_dom"/>
</dbReference>
<dbReference type="InterPro" id="IPR000146">
    <property type="entry name" value="FBPase_class-1"/>
</dbReference>
<dbReference type="InterPro" id="IPR033391">
    <property type="entry name" value="FBPase_N"/>
</dbReference>
<dbReference type="InterPro" id="IPR028343">
    <property type="entry name" value="FBPtase"/>
</dbReference>
<dbReference type="InterPro" id="IPR020548">
    <property type="entry name" value="Fructose_bisphosphatase_AS"/>
</dbReference>
<dbReference type="NCBIfam" id="NF006778">
    <property type="entry name" value="PRK09293.1-1"/>
    <property type="match status" value="1"/>
</dbReference>
<dbReference type="NCBIfam" id="NF006779">
    <property type="entry name" value="PRK09293.1-3"/>
    <property type="match status" value="1"/>
</dbReference>
<dbReference type="PANTHER" id="PTHR11556">
    <property type="entry name" value="FRUCTOSE-1,6-BISPHOSPHATASE-RELATED"/>
    <property type="match status" value="1"/>
</dbReference>
<dbReference type="PANTHER" id="PTHR11556:SF35">
    <property type="entry name" value="SEDOHEPTULOSE-1,7-BISPHOSPHATASE, CHLOROPLASTIC"/>
    <property type="match status" value="1"/>
</dbReference>
<dbReference type="Pfam" id="PF00316">
    <property type="entry name" value="FBPase"/>
    <property type="match status" value="1"/>
</dbReference>
<dbReference type="Pfam" id="PF18913">
    <property type="entry name" value="FBPase_C"/>
    <property type="match status" value="1"/>
</dbReference>
<dbReference type="PIRSF" id="PIRSF500210">
    <property type="entry name" value="FBPtase"/>
    <property type="match status" value="1"/>
</dbReference>
<dbReference type="PIRSF" id="PIRSF000904">
    <property type="entry name" value="FBPtase_SBPase"/>
    <property type="match status" value="1"/>
</dbReference>
<dbReference type="PRINTS" id="PR00115">
    <property type="entry name" value="F16BPHPHTASE"/>
</dbReference>
<dbReference type="SUPFAM" id="SSF56655">
    <property type="entry name" value="Carbohydrate phosphatase"/>
    <property type="match status" value="1"/>
</dbReference>
<dbReference type="PROSITE" id="PS00124">
    <property type="entry name" value="FBPASE"/>
    <property type="match status" value="1"/>
</dbReference>
<name>F16PA_VIBC3</name>
<proteinExistence type="inferred from homology"/>
<organism>
    <name type="scientific">Vibrio cholerae serotype O1 (strain ATCC 39541 / Classical Ogawa 395 / O395)</name>
    <dbReference type="NCBI Taxonomy" id="345073"/>
    <lineage>
        <taxon>Bacteria</taxon>
        <taxon>Pseudomonadati</taxon>
        <taxon>Pseudomonadota</taxon>
        <taxon>Gammaproteobacteria</taxon>
        <taxon>Vibrionales</taxon>
        <taxon>Vibrionaceae</taxon>
        <taxon>Vibrio</taxon>
    </lineage>
</organism>
<feature type="chain" id="PRO_0000364739" description="Fructose-1,6-bisphosphatase class 1">
    <location>
        <begin position="1"/>
        <end position="336"/>
    </location>
</feature>
<feature type="binding site" evidence="1">
    <location>
        <position position="92"/>
    </location>
    <ligand>
        <name>Mg(2+)</name>
        <dbReference type="ChEBI" id="CHEBI:18420"/>
        <label>1</label>
    </ligand>
</feature>
<feature type="binding site" evidence="1">
    <location>
        <position position="115"/>
    </location>
    <ligand>
        <name>Mg(2+)</name>
        <dbReference type="ChEBI" id="CHEBI:18420"/>
        <label>1</label>
    </ligand>
</feature>
<feature type="binding site" evidence="1">
    <location>
        <position position="115"/>
    </location>
    <ligand>
        <name>Mg(2+)</name>
        <dbReference type="ChEBI" id="CHEBI:18420"/>
        <label>2</label>
    </ligand>
</feature>
<feature type="binding site" evidence="1">
    <location>
        <position position="117"/>
    </location>
    <ligand>
        <name>Mg(2+)</name>
        <dbReference type="ChEBI" id="CHEBI:18420"/>
        <label>1</label>
    </ligand>
</feature>
<feature type="binding site" evidence="1">
    <location>
        <begin position="118"/>
        <end position="121"/>
    </location>
    <ligand>
        <name>substrate</name>
    </ligand>
</feature>
<feature type="binding site" evidence="1">
    <location>
        <position position="118"/>
    </location>
    <ligand>
        <name>Mg(2+)</name>
        <dbReference type="ChEBI" id="CHEBI:18420"/>
        <label>2</label>
    </ligand>
</feature>
<feature type="binding site" evidence="1">
    <location>
        <position position="211"/>
    </location>
    <ligand>
        <name>substrate</name>
    </ligand>
</feature>
<feature type="binding site" evidence="1">
    <location>
        <position position="244"/>
    </location>
    <ligand>
        <name>substrate</name>
    </ligand>
</feature>
<feature type="binding site" evidence="1">
    <location>
        <begin position="262"/>
        <end position="264"/>
    </location>
    <ligand>
        <name>substrate</name>
    </ligand>
</feature>
<feature type="binding site" evidence="1">
    <location>
        <position position="274"/>
    </location>
    <ligand>
        <name>substrate</name>
    </ligand>
</feature>
<feature type="binding site" evidence="1">
    <location>
        <position position="280"/>
    </location>
    <ligand>
        <name>Mg(2+)</name>
        <dbReference type="ChEBI" id="CHEBI:18420"/>
        <label>2</label>
    </ligand>
</feature>
<reference key="1">
    <citation type="submission" date="2007-03" db="EMBL/GenBank/DDBJ databases">
        <authorList>
            <person name="Heidelberg J."/>
        </authorList>
    </citation>
    <scope>NUCLEOTIDE SEQUENCE [LARGE SCALE GENOMIC DNA]</scope>
    <source>
        <strain>ATCC 39541 / Classical Ogawa 395 / O395</strain>
    </source>
</reference>
<reference key="2">
    <citation type="journal article" date="2008" name="PLoS ONE">
        <title>A recalibrated molecular clock and independent origins for the cholera pandemic clones.</title>
        <authorList>
            <person name="Feng L."/>
            <person name="Reeves P.R."/>
            <person name="Lan R."/>
            <person name="Ren Y."/>
            <person name="Gao C."/>
            <person name="Zhou Z."/>
            <person name="Ren Y."/>
            <person name="Cheng J."/>
            <person name="Wang W."/>
            <person name="Wang J."/>
            <person name="Qian W."/>
            <person name="Li D."/>
            <person name="Wang L."/>
        </authorList>
    </citation>
    <scope>NUCLEOTIDE SEQUENCE [LARGE SCALE GENOMIC DNA]</scope>
    <source>
        <strain>ATCC 39541 / Classical Ogawa 395 / O395</strain>
    </source>
</reference>
<comment type="catalytic activity">
    <reaction evidence="1">
        <text>beta-D-fructose 1,6-bisphosphate + H2O = beta-D-fructose 6-phosphate + phosphate</text>
        <dbReference type="Rhea" id="RHEA:11064"/>
        <dbReference type="ChEBI" id="CHEBI:15377"/>
        <dbReference type="ChEBI" id="CHEBI:32966"/>
        <dbReference type="ChEBI" id="CHEBI:43474"/>
        <dbReference type="ChEBI" id="CHEBI:57634"/>
        <dbReference type="EC" id="3.1.3.11"/>
    </reaction>
</comment>
<comment type="cofactor">
    <cofactor evidence="1">
        <name>Mg(2+)</name>
        <dbReference type="ChEBI" id="CHEBI:18420"/>
    </cofactor>
    <text evidence="1">Binds 2 magnesium ions per subunit.</text>
</comment>
<comment type="pathway">
    <text evidence="1">Carbohydrate biosynthesis; gluconeogenesis.</text>
</comment>
<comment type="subunit">
    <text evidence="1">Homotetramer.</text>
</comment>
<comment type="subcellular location">
    <subcellularLocation>
        <location evidence="1">Cytoplasm</location>
    </subcellularLocation>
</comment>
<comment type="similarity">
    <text evidence="1">Belongs to the FBPase class 1 family.</text>
</comment>
<keyword id="KW-0119">Carbohydrate metabolism</keyword>
<keyword id="KW-0963">Cytoplasm</keyword>
<keyword id="KW-0378">Hydrolase</keyword>
<keyword id="KW-0460">Magnesium</keyword>
<keyword id="KW-0479">Metal-binding</keyword>
<protein>
    <recommendedName>
        <fullName evidence="1">Fructose-1,6-bisphosphatase class 1</fullName>
        <shortName evidence="1">FBPase class 1</shortName>
        <ecNumber evidence="1">3.1.3.11</ecNumber>
    </recommendedName>
    <alternativeName>
        <fullName evidence="1">D-fructose-1,6-bisphosphate 1-phosphohydrolase class 1</fullName>
    </alternativeName>
</protein>